<dbReference type="EC" id="2.4.2.28" evidence="2"/>
<dbReference type="EMBL" id="U22233">
    <property type="protein sequence ID" value="AAA81646.1"/>
    <property type="molecule type" value="mRNA"/>
</dbReference>
<dbReference type="EMBL" id="L40432">
    <property type="protein sequence ID" value="AAG38871.1"/>
    <property type="molecule type" value="mRNA"/>
</dbReference>
<dbReference type="EMBL" id="L42634">
    <property type="protein sequence ID" value="AAR24607.2"/>
    <property type="molecule type" value="Genomic_DNA"/>
</dbReference>
<dbReference type="EMBL" id="L42627">
    <property type="protein sequence ID" value="AAR24607.2"/>
    <property type="status" value="JOINED"/>
    <property type="molecule type" value="Genomic_DNA"/>
</dbReference>
<dbReference type="EMBL" id="L42628">
    <property type="protein sequence ID" value="AAR24607.2"/>
    <property type="status" value="JOINED"/>
    <property type="molecule type" value="Genomic_DNA"/>
</dbReference>
<dbReference type="EMBL" id="L42629">
    <property type="protein sequence ID" value="AAR24607.2"/>
    <property type="status" value="JOINED"/>
    <property type="molecule type" value="Genomic_DNA"/>
</dbReference>
<dbReference type="EMBL" id="L42630">
    <property type="protein sequence ID" value="AAR24607.2"/>
    <property type="status" value="JOINED"/>
    <property type="molecule type" value="Genomic_DNA"/>
</dbReference>
<dbReference type="EMBL" id="L42631">
    <property type="protein sequence ID" value="AAR24607.2"/>
    <property type="status" value="JOINED"/>
    <property type="molecule type" value="Genomic_DNA"/>
</dbReference>
<dbReference type="EMBL" id="L42632">
    <property type="protein sequence ID" value="AAR24607.2"/>
    <property type="status" value="JOINED"/>
    <property type="molecule type" value="Genomic_DNA"/>
</dbReference>
<dbReference type="EMBL" id="L42633">
    <property type="protein sequence ID" value="AAR24607.2"/>
    <property type="status" value="JOINED"/>
    <property type="molecule type" value="Genomic_DNA"/>
</dbReference>
<dbReference type="EMBL" id="HE654772">
    <property type="protein sequence ID" value="CCF77345.1"/>
    <property type="molecule type" value="mRNA"/>
</dbReference>
<dbReference type="EMBL" id="HE654773">
    <property type="protein sequence ID" value="CCF77346.1"/>
    <property type="molecule type" value="mRNA"/>
</dbReference>
<dbReference type="EMBL" id="HE654774">
    <property type="protein sequence ID" value="CCF77347.1"/>
    <property type="molecule type" value="mRNA"/>
</dbReference>
<dbReference type="EMBL" id="HE654775">
    <property type="protein sequence ID" value="CCF77348.1"/>
    <property type="molecule type" value="mRNA"/>
</dbReference>
<dbReference type="EMBL" id="HE654776">
    <property type="protein sequence ID" value="CCF77349.1"/>
    <property type="molecule type" value="mRNA"/>
</dbReference>
<dbReference type="EMBL" id="HE654777">
    <property type="protein sequence ID" value="CCF77350.1"/>
    <property type="molecule type" value="mRNA"/>
</dbReference>
<dbReference type="EMBL" id="AY712791">
    <property type="protein sequence ID" value="AAU04442.1"/>
    <property type="molecule type" value="mRNA"/>
</dbReference>
<dbReference type="EMBL" id="AL359922">
    <property type="status" value="NOT_ANNOTATED_CDS"/>
    <property type="molecule type" value="Genomic_DNA"/>
</dbReference>
<dbReference type="EMBL" id="CH471071">
    <property type="protein sequence ID" value="EAW58606.1"/>
    <property type="molecule type" value="Genomic_DNA"/>
</dbReference>
<dbReference type="EMBL" id="BC026106">
    <property type="protein sequence ID" value="AAH26106.1"/>
    <property type="molecule type" value="mRNA"/>
</dbReference>
<dbReference type="CCDS" id="CCDS6509.1">
    <molecule id="Q13126-1"/>
</dbReference>
<dbReference type="CCDS" id="CCDS94391.1">
    <molecule id="Q13126-3"/>
</dbReference>
<dbReference type="PIR" id="I38969">
    <property type="entry name" value="I38969"/>
</dbReference>
<dbReference type="RefSeq" id="NP_001382970.1">
    <molecule id="Q13126-3"/>
    <property type="nucleotide sequence ID" value="NM_001396041.1"/>
</dbReference>
<dbReference type="RefSeq" id="NP_001382971.1">
    <molecule id="Q13126-7"/>
    <property type="nucleotide sequence ID" value="NM_001396042.1"/>
</dbReference>
<dbReference type="RefSeq" id="NP_001382972.1">
    <molecule id="Q13126-4"/>
    <property type="nucleotide sequence ID" value="NM_001396043.1"/>
</dbReference>
<dbReference type="RefSeq" id="NP_001382973.1">
    <molecule id="Q13126-2"/>
    <property type="nucleotide sequence ID" value="NM_001396044.1"/>
</dbReference>
<dbReference type="RefSeq" id="NP_001382974.1">
    <molecule id="Q13126-5"/>
    <property type="nucleotide sequence ID" value="NM_001396045.1"/>
</dbReference>
<dbReference type="RefSeq" id="NP_002442.2">
    <molecule id="Q13126-1"/>
    <property type="nucleotide sequence ID" value="NM_002451.3"/>
</dbReference>
<dbReference type="PDB" id="1CB0">
    <property type="method" value="X-ray"/>
    <property type="resolution" value="1.70 A"/>
    <property type="chains" value="A=1-283"/>
</dbReference>
<dbReference type="PDB" id="1CG6">
    <property type="method" value="X-ray"/>
    <property type="resolution" value="1.70 A"/>
    <property type="chains" value="A=1-283"/>
</dbReference>
<dbReference type="PDB" id="1K27">
    <property type="method" value="X-ray"/>
    <property type="resolution" value="1.95 A"/>
    <property type="chains" value="A=1-283"/>
</dbReference>
<dbReference type="PDB" id="1SD1">
    <property type="method" value="X-ray"/>
    <property type="resolution" value="2.03 A"/>
    <property type="chains" value="A=1-283"/>
</dbReference>
<dbReference type="PDB" id="1SD2">
    <property type="method" value="X-ray"/>
    <property type="resolution" value="2.10 A"/>
    <property type="chains" value="A=1-283"/>
</dbReference>
<dbReference type="PDB" id="3LN5">
    <property type="method" value="X-ray"/>
    <property type="resolution" value="1.90 A"/>
    <property type="chains" value="C=227-237"/>
</dbReference>
<dbReference type="PDB" id="3OZC">
    <property type="method" value="X-ray"/>
    <property type="resolution" value="1.93 A"/>
    <property type="chains" value="A=1-283"/>
</dbReference>
<dbReference type="PDB" id="3OZD">
    <property type="method" value="X-ray"/>
    <property type="resolution" value="2.10 A"/>
    <property type="chains" value="A/B=1-283"/>
</dbReference>
<dbReference type="PDB" id="3OZE">
    <property type="method" value="X-ray"/>
    <property type="resolution" value="2.00 A"/>
    <property type="chains" value="A/B/C/D/E/F=1-283"/>
</dbReference>
<dbReference type="PDB" id="5EUB">
    <property type="method" value="X-ray"/>
    <property type="resolution" value="1.81 A"/>
    <property type="chains" value="A=1-283"/>
</dbReference>
<dbReference type="PDB" id="5TC5">
    <property type="method" value="X-ray"/>
    <property type="resolution" value="1.96 A"/>
    <property type="chains" value="A/B/C=1-283"/>
</dbReference>
<dbReference type="PDB" id="5TC6">
    <property type="method" value="X-ray"/>
    <property type="resolution" value="1.48 A"/>
    <property type="chains" value="A=1-283"/>
</dbReference>
<dbReference type="PDB" id="5TC7">
    <property type="method" value="X-ray"/>
    <property type="resolution" value="1.75 A"/>
    <property type="chains" value="A=1-283"/>
</dbReference>
<dbReference type="PDB" id="5TC8">
    <property type="method" value="X-ray"/>
    <property type="resolution" value="1.80 A"/>
    <property type="chains" value="A=1-283"/>
</dbReference>
<dbReference type="PDB" id="6DYZ">
    <property type="method" value="X-ray"/>
    <property type="resolution" value="1.62 A"/>
    <property type="chains" value="A=1-283"/>
</dbReference>
<dbReference type="PDB" id="6DZ0">
    <property type="method" value="X-ray"/>
    <property type="resolution" value="1.62 A"/>
    <property type="chains" value="A=1-283"/>
</dbReference>
<dbReference type="PDB" id="6DZ2">
    <property type="method" value="X-ray"/>
    <property type="resolution" value="1.99 A"/>
    <property type="chains" value="A/B/C=1-283"/>
</dbReference>
<dbReference type="PDB" id="6DZ3">
    <property type="method" value="X-ray"/>
    <property type="resolution" value="1.91 A"/>
    <property type="chains" value="A/B/C=1-283"/>
</dbReference>
<dbReference type="PDBsum" id="1CB0"/>
<dbReference type="PDBsum" id="1CG6"/>
<dbReference type="PDBsum" id="1K27"/>
<dbReference type="PDBsum" id="1SD1"/>
<dbReference type="PDBsum" id="1SD2"/>
<dbReference type="PDBsum" id="3LN5"/>
<dbReference type="PDBsum" id="3OZC"/>
<dbReference type="PDBsum" id="3OZD"/>
<dbReference type="PDBsum" id="3OZE"/>
<dbReference type="PDBsum" id="5EUB"/>
<dbReference type="PDBsum" id="5TC5"/>
<dbReference type="PDBsum" id="5TC6"/>
<dbReference type="PDBsum" id="5TC7"/>
<dbReference type="PDBsum" id="5TC8"/>
<dbReference type="PDBsum" id="6DYZ"/>
<dbReference type="PDBsum" id="6DZ0"/>
<dbReference type="PDBsum" id="6DZ2"/>
<dbReference type="PDBsum" id="6DZ3"/>
<dbReference type="SMR" id="Q13126"/>
<dbReference type="BioGRID" id="110611">
    <property type="interactions" value="92"/>
</dbReference>
<dbReference type="FunCoup" id="Q13126">
    <property type="interactions" value="2042"/>
</dbReference>
<dbReference type="IntAct" id="Q13126">
    <property type="interactions" value="23"/>
</dbReference>
<dbReference type="MINT" id="Q13126"/>
<dbReference type="STRING" id="9606.ENSP00000494373"/>
<dbReference type="BindingDB" id="Q13126"/>
<dbReference type="ChEMBL" id="CHEMBL4941"/>
<dbReference type="DrugBank" id="DB02158">
    <property type="generic name" value="(2S,3S,4R,5S)-2-(4-Amino-4,5-dihydro-1H-pyrrolo[3,2-d]pyrimidin-7-yl)-5-[(methylsulfanyl)methyl]-3,4-pyrrolidinediol"/>
</dbReference>
<dbReference type="DrugBank" id="DB02933">
    <property type="generic name" value="5'-Deoxy-5'-(Methylthio)-Tubercidin"/>
</dbReference>
<dbReference type="DrugBank" id="DB02282">
    <property type="generic name" value="5'-S-methyl-5'-thioadenosine"/>
</dbReference>
<dbReference type="DrugBank" id="DB00173">
    <property type="generic name" value="Adenine"/>
</dbReference>
<dbReference type="DrugBank" id="DB02281">
    <property type="generic name" value="Formycin"/>
</dbReference>
<dbReference type="GlyGen" id="Q13126">
    <property type="glycosylation" value="1 site, 1 O-linked glycan (1 site)"/>
</dbReference>
<dbReference type="iPTMnet" id="Q13126"/>
<dbReference type="MetOSite" id="Q13126"/>
<dbReference type="PhosphoSitePlus" id="Q13126"/>
<dbReference type="SwissPalm" id="Q13126"/>
<dbReference type="BioMuta" id="MTAP"/>
<dbReference type="DMDM" id="143811423"/>
<dbReference type="REPRODUCTION-2DPAGE" id="Q13126"/>
<dbReference type="jPOST" id="Q13126"/>
<dbReference type="MassIVE" id="Q13126"/>
<dbReference type="PaxDb" id="9606-ENSP00000369519"/>
<dbReference type="PeptideAtlas" id="Q13126"/>
<dbReference type="ProteomicsDB" id="59174">
    <molecule id="Q13126-1"/>
</dbReference>
<dbReference type="Pumba" id="Q13126"/>
<dbReference type="Antibodypedia" id="35188">
    <property type="antibodies" value="310 antibodies from 34 providers"/>
</dbReference>
<dbReference type="DNASU" id="4507"/>
<dbReference type="Ensembl" id="ENST00000580900.5">
    <molecule id="Q13126-3"/>
    <property type="protein sequence ID" value="ENSP00000463424.1"/>
    <property type="gene ID" value="ENSG00000099810.21"/>
</dbReference>
<dbReference type="Ensembl" id="ENST00000644715.2">
    <molecule id="Q13126-1"/>
    <property type="protein sequence ID" value="ENSP00000494373.1"/>
    <property type="gene ID" value="ENSG00000099810.21"/>
</dbReference>
<dbReference type="GeneID" id="4507"/>
<dbReference type="KEGG" id="hsa:4507"/>
<dbReference type="MANE-Select" id="ENST00000644715.2">
    <property type="protein sequence ID" value="ENSP00000494373.1"/>
    <property type="RefSeq nucleotide sequence ID" value="NM_002451.4"/>
    <property type="RefSeq protein sequence ID" value="NP_002442.2"/>
</dbReference>
<dbReference type="UCSC" id="uc003zph.4">
    <molecule id="Q13126-1"/>
    <property type="organism name" value="human"/>
</dbReference>
<dbReference type="AGR" id="HGNC:7413"/>
<dbReference type="CTD" id="4507"/>
<dbReference type="DisGeNET" id="4507"/>
<dbReference type="GeneCards" id="MTAP"/>
<dbReference type="HGNC" id="HGNC:7413">
    <property type="gene designation" value="MTAP"/>
</dbReference>
<dbReference type="HPA" id="ENSG00000099810">
    <property type="expression patterns" value="Low tissue specificity"/>
</dbReference>
<dbReference type="MalaCards" id="MTAP"/>
<dbReference type="MIM" id="112250">
    <property type="type" value="phenotype"/>
</dbReference>
<dbReference type="MIM" id="156540">
    <property type="type" value="gene"/>
</dbReference>
<dbReference type="neXtProt" id="NX_Q13126"/>
<dbReference type="OpenTargets" id="ENSG00000099810"/>
<dbReference type="Orphanet" id="85182">
    <property type="disease" value="Diaphyseal medullary stenosis-bone malignancy syndrome"/>
</dbReference>
<dbReference type="PharmGKB" id="PA31220"/>
<dbReference type="VEuPathDB" id="HostDB:ENSG00000099810"/>
<dbReference type="eggNOG" id="KOG3985">
    <property type="taxonomic scope" value="Eukaryota"/>
</dbReference>
<dbReference type="GeneTree" id="ENSGT00950000182991"/>
<dbReference type="InParanoid" id="Q13126"/>
<dbReference type="OMA" id="ADPFCPE"/>
<dbReference type="OrthoDB" id="431409at2759"/>
<dbReference type="PAN-GO" id="Q13126">
    <property type="GO annotations" value="3 GO annotations based on evolutionary models"/>
</dbReference>
<dbReference type="PhylomeDB" id="Q13126"/>
<dbReference type="TreeFam" id="TF312883"/>
<dbReference type="BioCyc" id="MetaCyc:HS01913-MONOMER"/>
<dbReference type="BRENDA" id="2.4.2.28">
    <property type="organism ID" value="2681"/>
</dbReference>
<dbReference type="PathwayCommons" id="Q13126"/>
<dbReference type="Reactome" id="R-HSA-1237112">
    <property type="pathway name" value="Methionine salvage pathway"/>
</dbReference>
<dbReference type="Reactome" id="R-HSA-8950505">
    <property type="pathway name" value="Gene and protein expression by JAK-STAT signaling after Interleukin-12 stimulation"/>
</dbReference>
<dbReference type="SABIO-RK" id="Q13126"/>
<dbReference type="SignaLink" id="Q13126"/>
<dbReference type="UniPathway" id="UPA00904">
    <property type="reaction ID" value="UER00873"/>
</dbReference>
<dbReference type="BioGRID-ORCS" id="4507">
    <property type="hits" value="39 hits in 1160 CRISPR screens"/>
</dbReference>
<dbReference type="ChiTaRS" id="MTAP">
    <property type="organism name" value="human"/>
</dbReference>
<dbReference type="EvolutionaryTrace" id="Q13126"/>
<dbReference type="GeneWiki" id="MTAP"/>
<dbReference type="GenomeRNAi" id="4507"/>
<dbReference type="Pharos" id="Q13126">
    <property type="development level" value="Tchem"/>
</dbReference>
<dbReference type="PRO" id="PR:Q13126"/>
<dbReference type="Proteomes" id="UP000005640">
    <property type="component" value="Chromosome 9"/>
</dbReference>
<dbReference type="RNAct" id="Q13126">
    <property type="molecule type" value="protein"/>
</dbReference>
<dbReference type="Bgee" id="ENSG00000099810">
    <property type="expression patterns" value="Expressed in adrenal tissue and 160 other cell types or tissues"/>
</dbReference>
<dbReference type="ExpressionAtlas" id="Q13126">
    <property type="expression patterns" value="baseline and differential"/>
</dbReference>
<dbReference type="GO" id="GO:0005829">
    <property type="term" value="C:cytosol"/>
    <property type="evidence" value="ECO:0000314"/>
    <property type="project" value="HPA"/>
</dbReference>
<dbReference type="GO" id="GO:0070062">
    <property type="term" value="C:extracellular exosome"/>
    <property type="evidence" value="ECO:0007005"/>
    <property type="project" value="UniProtKB"/>
</dbReference>
<dbReference type="GO" id="GO:0005654">
    <property type="term" value="C:nucleoplasm"/>
    <property type="evidence" value="ECO:0000314"/>
    <property type="project" value="HPA"/>
</dbReference>
<dbReference type="GO" id="GO:0004645">
    <property type="term" value="F:1,4-alpha-oligoglucan phosphorylase activity"/>
    <property type="evidence" value="ECO:0000304"/>
    <property type="project" value="ProtInc"/>
</dbReference>
<dbReference type="GO" id="GO:0017061">
    <property type="term" value="F:S-methyl-5-thioadenosine phosphorylase activity"/>
    <property type="evidence" value="ECO:0000318"/>
    <property type="project" value="GO_Central"/>
</dbReference>
<dbReference type="GO" id="GO:0019509">
    <property type="term" value="P:L-methionine salvage from methylthioadenosine"/>
    <property type="evidence" value="ECO:0000318"/>
    <property type="project" value="GO_Central"/>
</dbReference>
<dbReference type="GO" id="GO:0032259">
    <property type="term" value="P:methylation"/>
    <property type="evidence" value="ECO:0007669"/>
    <property type="project" value="Ensembl"/>
</dbReference>
<dbReference type="GO" id="GO:0006139">
    <property type="term" value="P:nucleobase-containing compound metabolic process"/>
    <property type="evidence" value="ECO:0000304"/>
    <property type="project" value="ProtInc"/>
</dbReference>
<dbReference type="GO" id="GO:0006166">
    <property type="term" value="P:purine ribonucleoside salvage"/>
    <property type="evidence" value="ECO:0007669"/>
    <property type="project" value="UniProtKB-KW"/>
</dbReference>
<dbReference type="GO" id="GO:0033574">
    <property type="term" value="P:response to testosterone"/>
    <property type="evidence" value="ECO:0007669"/>
    <property type="project" value="Ensembl"/>
</dbReference>
<dbReference type="CDD" id="cd09010">
    <property type="entry name" value="MTAP_SsMTAPII_like_MTIP"/>
    <property type="match status" value="1"/>
</dbReference>
<dbReference type="FunFam" id="3.40.50.1580:FF:000006">
    <property type="entry name" value="Purine nucleoside phosphorylase"/>
    <property type="match status" value="1"/>
</dbReference>
<dbReference type="Gene3D" id="3.40.50.1580">
    <property type="entry name" value="Nucleoside phosphorylase domain"/>
    <property type="match status" value="1"/>
</dbReference>
<dbReference type="HAMAP" id="MF_01963">
    <property type="entry name" value="MTAP"/>
    <property type="match status" value="1"/>
</dbReference>
<dbReference type="InterPro" id="IPR010044">
    <property type="entry name" value="MTAP"/>
</dbReference>
<dbReference type="InterPro" id="IPR000845">
    <property type="entry name" value="Nucleoside_phosphorylase_d"/>
</dbReference>
<dbReference type="InterPro" id="IPR035994">
    <property type="entry name" value="Nucleoside_phosphorylase_sf"/>
</dbReference>
<dbReference type="InterPro" id="IPR018099">
    <property type="entry name" value="Purine_phosphorylase-2_CS"/>
</dbReference>
<dbReference type="NCBIfam" id="TIGR01694">
    <property type="entry name" value="MTAP"/>
    <property type="match status" value="1"/>
</dbReference>
<dbReference type="PANTHER" id="PTHR42679">
    <property type="entry name" value="S-METHYL-5'-THIOADENOSINE PHOSPHORYLASE"/>
    <property type="match status" value="1"/>
</dbReference>
<dbReference type="PANTHER" id="PTHR42679:SF2">
    <property type="entry name" value="S-METHYL-5'-THIOADENOSINE PHOSPHORYLASE"/>
    <property type="match status" value="1"/>
</dbReference>
<dbReference type="Pfam" id="PF01048">
    <property type="entry name" value="PNP_UDP_1"/>
    <property type="match status" value="1"/>
</dbReference>
<dbReference type="SUPFAM" id="SSF53167">
    <property type="entry name" value="Purine and uridine phosphorylases"/>
    <property type="match status" value="1"/>
</dbReference>
<dbReference type="PROSITE" id="PS01240">
    <property type="entry name" value="PNP_MTAP_2"/>
    <property type="match status" value="1"/>
</dbReference>
<name>MTAP_HUMAN</name>
<sequence>MASGTTTTAVKIGIIGGTGLDDPEILEGRTEKYVDTPFGKPSDALILGKIKNVDCVLLARHGRQHTIMPSKVNYQANIWALKEEGCTHVIVTTACGSLREEIQPGDIVIIDQFIDRTTMRPQSFYDGSHSCARGVCHIPMAEPFCPKTREVLIETAKKLGLRCHSKGTMVTIEGPRFSSRAESFMFRTWGADVINMTTVPEVVLAKEAGICYASIAMATDYDCWKEHEEAVSVDRVLKTLKENANKAKSLLLTTIPQIGSTEWSETLHNLKNMAQFSVLLPRH</sequence>
<organism>
    <name type="scientific">Homo sapiens</name>
    <name type="common">Human</name>
    <dbReference type="NCBI Taxonomy" id="9606"/>
    <lineage>
        <taxon>Eukaryota</taxon>
        <taxon>Metazoa</taxon>
        <taxon>Chordata</taxon>
        <taxon>Craniata</taxon>
        <taxon>Vertebrata</taxon>
        <taxon>Euteleostomi</taxon>
        <taxon>Mammalia</taxon>
        <taxon>Eutheria</taxon>
        <taxon>Euarchontoglires</taxon>
        <taxon>Primates</taxon>
        <taxon>Haplorrhini</taxon>
        <taxon>Catarrhini</taxon>
        <taxon>Hominidae</taxon>
        <taxon>Homo</taxon>
    </lineage>
</organism>
<gene>
    <name evidence="2" type="primary">MTAP</name>
    <name type="synonym">MSAP</name>
</gene>
<accession>Q13126</accession>
<accession>I2G7M5</accession>
<accession>I2G7M6</accession>
<accession>I2G7M7</accession>
<accession>I2G7M8</accession>
<accession>I2G7M9</accession>
<accession>I2G7N0</accession>
<accession>Q5T3P3</accession>
<accession>Q9H010</accession>
<reference key="1">
    <citation type="journal article" date="1995" name="Proc. Natl. Acad. Sci. U.S.A.">
        <title>Construction of a 2.8-megabase yeast artificial chromosome contig and cloning of the human methylthioadenosine phosphorylase gene from the tumor suppressor region on 9p21.</title>
        <authorList>
            <person name="Olopade O.I."/>
            <person name="Pomykala H.M."/>
            <person name="Hagos F."/>
            <person name="Sveen L.W."/>
            <person name="Espinosa R. III"/>
            <person name="Dreyling M.H."/>
            <person name="Gursky S."/>
            <person name="Stadler W.M."/>
            <person name="le Beau M.M."/>
            <person name="Bohlander S.K."/>
        </authorList>
    </citation>
    <scope>NUCLEOTIDE SEQUENCE [MRNA]</scope>
    <scope>VARIANT ILE-56</scope>
    <source>
        <tissue>Epidermis</tissue>
    </source>
</reference>
<reference key="2">
    <citation type="journal article" date="1996" name="Proc. Natl. Acad. Sci. U.S.A.">
        <title>Genomic cloning of methylthioadenosine phosphorylase: a purine metabolic enzyme deficient in multiple different cancers.</title>
        <authorList>
            <person name="Nobori T."/>
            <person name="Takabayashi K."/>
            <person name="Tran P."/>
            <person name="Orvis L."/>
            <person name="Batova A."/>
            <person name="Yu A.L."/>
            <person name="Carson D.A."/>
        </authorList>
    </citation>
    <scope>NUCLEOTIDE SEQUENCE [GENOMIC DNA / MRNA]</scope>
    <source>
        <tissue>Placenta</tissue>
    </source>
</reference>
<reference key="3">
    <citation type="journal article" date="2012" name="Am. J. Hum. Genet.">
        <title>Primate genome gain and loss: a bone dysplasia, muscular dystrophy, and bone cancer syndrome resulting from mutated retroviral-derived MTAP transcripts.</title>
        <authorList>
            <person name="Camacho-Vanegas O."/>
            <person name="Camacho S.C."/>
            <person name="Till J."/>
            <person name="Miranda-Lorenzo I."/>
            <person name="Terzo E."/>
            <person name="Ramirez M.C."/>
            <person name="Schramm V."/>
            <person name="Cordovano G."/>
            <person name="Watts G."/>
            <person name="Mehta S."/>
            <person name="Kimonis V."/>
            <person name="Hoch B."/>
            <person name="Philibert K.D."/>
            <person name="Raabe C.A."/>
            <person name="Bishop D.F."/>
            <person name="Glucksman M.J."/>
            <person name="Martignetti J.A."/>
        </authorList>
    </citation>
    <scope>NUCLEOTIDE SEQUENCE [MRNA] (ISOFORMS 2; 3; 4; 5; 6 AND 7)</scope>
    <scope>INVOLVEMENT IN DMSMFH</scope>
</reference>
<reference key="4">
    <citation type="submission" date="2004-08" db="EMBL/GenBank/DDBJ databases">
        <title>Identification of human methylthioadenosine phosphorylase (MTAP) mRNA mutation in colon cancer cell line COLO 205.</title>
        <authorList>
            <person name="Li Q."/>
            <person name="Cao W.-X."/>
            <person name="Zhang Y."/>
            <person name="Shi M.-M."/>
            <person name="Liu B.-Y."/>
            <person name="Zhu Z.-G."/>
            <person name="Lin Y.-Z."/>
        </authorList>
    </citation>
    <scope>NUCLEOTIDE SEQUENCE [MRNA]</scope>
    <scope>VARIANT ILE-56</scope>
    <source>
        <tissue>Colon</tissue>
    </source>
</reference>
<reference key="5">
    <citation type="journal article" date="2004" name="Nature">
        <title>DNA sequence and analysis of human chromosome 9.</title>
        <authorList>
            <person name="Humphray S.J."/>
            <person name="Oliver K."/>
            <person name="Hunt A.R."/>
            <person name="Plumb R.W."/>
            <person name="Loveland J.E."/>
            <person name="Howe K.L."/>
            <person name="Andrews T.D."/>
            <person name="Searle S."/>
            <person name="Hunt S.E."/>
            <person name="Scott C.E."/>
            <person name="Jones M.C."/>
            <person name="Ainscough R."/>
            <person name="Almeida J.P."/>
            <person name="Ambrose K.D."/>
            <person name="Ashwell R.I.S."/>
            <person name="Babbage A.K."/>
            <person name="Babbage S."/>
            <person name="Bagguley C.L."/>
            <person name="Bailey J."/>
            <person name="Banerjee R."/>
            <person name="Barker D.J."/>
            <person name="Barlow K.F."/>
            <person name="Bates K."/>
            <person name="Beasley H."/>
            <person name="Beasley O."/>
            <person name="Bird C.P."/>
            <person name="Bray-Allen S."/>
            <person name="Brown A.J."/>
            <person name="Brown J.Y."/>
            <person name="Burford D."/>
            <person name="Burrill W."/>
            <person name="Burton J."/>
            <person name="Carder C."/>
            <person name="Carter N.P."/>
            <person name="Chapman J.C."/>
            <person name="Chen Y."/>
            <person name="Clarke G."/>
            <person name="Clark S.Y."/>
            <person name="Clee C.M."/>
            <person name="Clegg S."/>
            <person name="Collier R.E."/>
            <person name="Corby N."/>
            <person name="Crosier M."/>
            <person name="Cummings A.T."/>
            <person name="Davies J."/>
            <person name="Dhami P."/>
            <person name="Dunn M."/>
            <person name="Dutta I."/>
            <person name="Dyer L.W."/>
            <person name="Earthrowl M.E."/>
            <person name="Faulkner L."/>
            <person name="Fleming C.J."/>
            <person name="Frankish A."/>
            <person name="Frankland J.A."/>
            <person name="French L."/>
            <person name="Fricker D.G."/>
            <person name="Garner P."/>
            <person name="Garnett J."/>
            <person name="Ghori J."/>
            <person name="Gilbert J.G.R."/>
            <person name="Glison C."/>
            <person name="Grafham D.V."/>
            <person name="Gribble S."/>
            <person name="Griffiths C."/>
            <person name="Griffiths-Jones S."/>
            <person name="Grocock R."/>
            <person name="Guy J."/>
            <person name="Hall R.E."/>
            <person name="Hammond S."/>
            <person name="Harley J.L."/>
            <person name="Harrison E.S.I."/>
            <person name="Hart E.A."/>
            <person name="Heath P.D."/>
            <person name="Henderson C.D."/>
            <person name="Hopkins B.L."/>
            <person name="Howard P.J."/>
            <person name="Howden P.J."/>
            <person name="Huckle E."/>
            <person name="Johnson C."/>
            <person name="Johnson D."/>
            <person name="Joy A.A."/>
            <person name="Kay M."/>
            <person name="Keenan S."/>
            <person name="Kershaw J.K."/>
            <person name="Kimberley A.M."/>
            <person name="King A."/>
            <person name="Knights A."/>
            <person name="Laird G.K."/>
            <person name="Langford C."/>
            <person name="Lawlor S."/>
            <person name="Leongamornlert D.A."/>
            <person name="Leversha M."/>
            <person name="Lloyd C."/>
            <person name="Lloyd D.M."/>
            <person name="Lovell J."/>
            <person name="Martin S."/>
            <person name="Mashreghi-Mohammadi M."/>
            <person name="Matthews L."/>
            <person name="McLaren S."/>
            <person name="McLay K.E."/>
            <person name="McMurray A."/>
            <person name="Milne S."/>
            <person name="Nickerson T."/>
            <person name="Nisbett J."/>
            <person name="Nordsiek G."/>
            <person name="Pearce A.V."/>
            <person name="Peck A.I."/>
            <person name="Porter K.M."/>
            <person name="Pandian R."/>
            <person name="Pelan S."/>
            <person name="Phillimore B."/>
            <person name="Povey S."/>
            <person name="Ramsey Y."/>
            <person name="Rand V."/>
            <person name="Scharfe M."/>
            <person name="Sehra H.K."/>
            <person name="Shownkeen R."/>
            <person name="Sims S.K."/>
            <person name="Skuce C.D."/>
            <person name="Smith M."/>
            <person name="Steward C.A."/>
            <person name="Swarbreck D."/>
            <person name="Sycamore N."/>
            <person name="Tester J."/>
            <person name="Thorpe A."/>
            <person name="Tracey A."/>
            <person name="Tromans A."/>
            <person name="Thomas D.W."/>
            <person name="Wall M."/>
            <person name="Wallis J.M."/>
            <person name="West A.P."/>
            <person name="Whitehead S.L."/>
            <person name="Willey D.L."/>
            <person name="Williams S.A."/>
            <person name="Wilming L."/>
            <person name="Wray P.W."/>
            <person name="Young L."/>
            <person name="Ashurst J.L."/>
            <person name="Coulson A."/>
            <person name="Blocker H."/>
            <person name="Durbin R.M."/>
            <person name="Sulston J.E."/>
            <person name="Hubbard T."/>
            <person name="Jackson M.J."/>
            <person name="Bentley D.R."/>
            <person name="Beck S."/>
            <person name="Rogers J."/>
            <person name="Dunham I."/>
        </authorList>
    </citation>
    <scope>NUCLEOTIDE SEQUENCE [LARGE SCALE GENOMIC DNA]</scope>
</reference>
<reference key="6">
    <citation type="submission" date="2005-09" db="EMBL/GenBank/DDBJ databases">
        <authorList>
            <person name="Mural R.J."/>
            <person name="Istrail S."/>
            <person name="Sutton G.G."/>
            <person name="Florea L."/>
            <person name="Halpern A.L."/>
            <person name="Mobarry C.M."/>
            <person name="Lippert R."/>
            <person name="Walenz B."/>
            <person name="Shatkay H."/>
            <person name="Dew I."/>
            <person name="Miller J.R."/>
            <person name="Flanigan M.J."/>
            <person name="Edwards N.J."/>
            <person name="Bolanos R."/>
            <person name="Fasulo D."/>
            <person name="Halldorsson B.V."/>
            <person name="Hannenhalli S."/>
            <person name="Turner R."/>
            <person name="Yooseph S."/>
            <person name="Lu F."/>
            <person name="Nusskern D.R."/>
            <person name="Shue B.C."/>
            <person name="Zheng X.H."/>
            <person name="Zhong F."/>
            <person name="Delcher A.L."/>
            <person name="Huson D.H."/>
            <person name="Kravitz S.A."/>
            <person name="Mouchard L."/>
            <person name="Reinert K."/>
            <person name="Remington K.A."/>
            <person name="Clark A.G."/>
            <person name="Waterman M.S."/>
            <person name="Eichler E.E."/>
            <person name="Adams M.D."/>
            <person name="Hunkapiller M.W."/>
            <person name="Myers E.W."/>
            <person name="Venter J.C."/>
        </authorList>
    </citation>
    <scope>NUCLEOTIDE SEQUENCE [LARGE SCALE GENOMIC DNA]</scope>
</reference>
<reference key="7">
    <citation type="journal article" date="2004" name="Genome Res.">
        <title>The status, quality, and expansion of the NIH full-length cDNA project: the Mammalian Gene Collection (MGC).</title>
        <authorList>
            <consortium name="The MGC Project Team"/>
        </authorList>
    </citation>
    <scope>NUCLEOTIDE SEQUENCE [LARGE SCALE MRNA]</scope>
    <scope>VARIANT ILE-56</scope>
    <source>
        <tissue>Brain</tissue>
    </source>
</reference>
<reference key="8">
    <citation type="journal article" date="1986" name="J. Biol. Chem.">
        <title>Purification and characterization of 5'-deoxy-5'-methylthioadenosine phosphorylase from human placenta.</title>
        <authorList>
            <person name="Della Ragione F."/>
            <person name="Carteni-Farina M."/>
            <person name="Gragnaniello V."/>
            <person name="Schettino M.I."/>
            <person name="Zappia V."/>
        </authorList>
    </citation>
    <scope>FUNCTION</scope>
    <scope>BIOPHYSICOCHEMICAL PROPERTIES</scope>
    <scope>SUBUNIT</scope>
</reference>
<reference key="9">
    <citation type="journal article" date="1996" name="Biochem. Biophys. Res. Commun.">
        <title>Purification and characterization of recombinant human 5'-methylthioadenosine phosphorylase: definite identification of coding cDNA.</title>
        <authorList>
            <person name="Ragione F.D."/>
            <person name="Takabayashi K."/>
            <person name="Mastropietro S."/>
            <person name="Mercurio C."/>
            <person name="Oliva A."/>
            <person name="Russo G.L."/>
            <person name="Pietra V.D."/>
            <person name="Borriello A."/>
            <person name="Nobori T."/>
            <person name="Carson D.A."/>
            <person name="Zappia V."/>
        </authorList>
    </citation>
    <scope>BIOPHYSICOCHEMICAL PROPERTIES</scope>
    <scope>SUBUNIT</scope>
</reference>
<reference key="10">
    <citation type="journal article" date="2002" name="Clin. Cancer Res.">
        <title>Methylthioadenosine phosphorylase gene deletions are common in osteosarcoma.</title>
        <authorList>
            <person name="Garcia-Castellano J.M."/>
            <person name="Villanueva A."/>
            <person name="Healey J.H."/>
            <person name="Sowers R."/>
            <person name="Cordon-Cardo C."/>
            <person name="Huvos A."/>
            <person name="Bertino J.R."/>
            <person name="Meyers P."/>
            <person name="Gorlick R."/>
        </authorList>
    </citation>
    <scope>INVOLVEMENT IN OSTEOSARCOMA</scope>
</reference>
<reference key="11">
    <citation type="journal article" date="2007" name="Int. J. Oncol.">
        <title>Methylthioadenosine phosphorylase deficiency in Japanese osteosarcoma patients.</title>
        <authorList>
            <person name="Miyazaki S."/>
            <person name="Nishioka J."/>
            <person name="Shiraishi T."/>
            <person name="Matsumine A."/>
            <person name="Uchida A."/>
            <person name="Nobori T."/>
        </authorList>
    </citation>
    <scope>INVOLVEMENT IN OSTEOSARCOMA</scope>
</reference>
<reference key="12">
    <citation type="journal article" date="2009" name="J. Cell. Biochem.">
        <title>Direct and tumor microenvironment mediated influences of 5'-deoxy-5'-(methylthio)adenosine on tumor progression of malignant melanoma.</title>
        <authorList>
            <person name="Stevens A.P."/>
            <person name="Spangler B."/>
            <person name="Wallner S."/>
            <person name="Kreutz M."/>
            <person name="Dettmer K."/>
            <person name="Oefner P.J."/>
            <person name="Bosserhoff A.K."/>
        </authorList>
    </citation>
    <scope>INVOLVEMENT IN MALIGNANT MELANOMA</scope>
</reference>
<reference key="13">
    <citation type="journal article" date="2011" name="BMC Syst. Biol.">
        <title>Initial characterization of the human central proteome.</title>
        <authorList>
            <person name="Burkard T.R."/>
            <person name="Planyavsky M."/>
            <person name="Kaupe I."/>
            <person name="Breitwieser F.P."/>
            <person name="Buerckstuemmer T."/>
            <person name="Bennett K.L."/>
            <person name="Superti-Furga G."/>
            <person name="Colinge J."/>
        </authorList>
    </citation>
    <scope>IDENTIFICATION BY MASS SPECTROMETRY [LARGE SCALE ANALYSIS]</scope>
</reference>
<reference key="14">
    <citation type="journal article" date="2011" name="Genes Chromosomes Cancer">
        <title>Downregulation of methylthioadenosine phosphorylase by homozygous deletion in gastric carcinoma.</title>
        <authorList>
            <person name="Kim J."/>
            <person name="Kim M.A."/>
            <person name="Min S.Y."/>
            <person name="Jee C.D."/>
            <person name="Lee H.E."/>
            <person name="Kim W.H."/>
        </authorList>
    </citation>
    <scope>INVOLVEMENT IN GASTRIC CANCER</scope>
</reference>
<reference key="15">
    <citation type="journal article" date="1999" name="Structure">
        <title>The structure of human 5'-deoxy-5'-methylthioadenosine phosphorylase at 1.7-A resolution provides insights into substrate binding and catalysis.</title>
        <authorList>
            <person name="Appleby T.C."/>
            <person name="Erion M.D."/>
            <person name="Ealick S.E."/>
        </authorList>
    </citation>
    <scope>X-RAY CRYSTALLOGRAPHY (1.7 ANGSTROMS) IN COMPLEX WITH MTA</scope>
</reference>
<reference key="16">
    <citation type="journal article" date="2004" name="Biochemistry">
        <title>Structural comparison of MTA phosphorylase and MTA/AdoHcy nucleosidase explains substrate preferences and identifies regions exploitable for inhibitor design.</title>
        <authorList>
            <person name="Lee J.E."/>
            <person name="Settembre E.C."/>
            <person name="Cornell K.A."/>
            <person name="Riscoe M.K."/>
            <person name="Sufrin J.R."/>
            <person name="Ealick S.E."/>
            <person name="Howell P.L."/>
        </authorList>
    </citation>
    <scope>X-RAY CRYSTALLOGRAPHY (2.03 ANGSTROMS) IN COMPLEX WITH SUBSTRATE ANALOGS</scope>
</reference>
<reference key="17">
    <citation type="journal article" date="2004" name="Biochemistry">
        <title>Picomolar transition state analogue inhibitors of human 5'-methylthioadenosine phosphorylase and X-ray structure with MT-immucillin-A.</title>
        <authorList>
            <person name="Singh V."/>
            <person name="Shi W."/>
            <person name="Evans G.B."/>
            <person name="Tyler P.C."/>
            <person name="Furneaux R.H."/>
            <person name="Almo S.C."/>
            <person name="Schramm V.L."/>
        </authorList>
    </citation>
    <scope>X-RAY CRYSTALLOGRAPHY (1.95 ANGSTROMS) IN COMPLEX WITH INHIBITORS</scope>
</reference>
<reference key="18">
    <citation type="journal article" date="2011" name="Haematologica">
        <title>The impact of human leukocyte antigen (HLA) micropolymorphism on ligand specificity within the HLA-B*41 allotypic family.</title>
        <authorList>
            <person name="Bade-Doding C."/>
            <person name="Theodossis A."/>
            <person name="Gras S."/>
            <person name="Kjer-Nielsen L."/>
            <person name="Eiz-Vesper B."/>
            <person name="Seltsam A."/>
            <person name="Huyton T."/>
            <person name="Rossjohn J."/>
            <person name="McCluskey J."/>
            <person name="Blasczyk R."/>
        </authorList>
    </citation>
    <scope>X-RAY CRYSTALLOGRAPHY (1.90 ANGSTROMS) OF 227-237</scope>
</reference>
<keyword id="KW-0002">3D-structure</keyword>
<keyword id="KW-0007">Acetylation</keyword>
<keyword id="KW-0025">Alternative splicing</keyword>
<keyword id="KW-0963">Cytoplasm</keyword>
<keyword id="KW-0328">Glycosyltransferase</keyword>
<keyword id="KW-0539">Nucleus</keyword>
<keyword id="KW-1267">Proteomics identification</keyword>
<keyword id="KW-0660">Purine salvage</keyword>
<keyword id="KW-1185">Reference proteome</keyword>
<keyword id="KW-0808">Transferase</keyword>
<feature type="chain" id="PRO_0000184545" description="S-methyl-5'-thioadenosine phosphorylase">
    <location>
        <begin position="1"/>
        <end position="283"/>
    </location>
</feature>
<feature type="binding site">
    <location>
        <position position="18"/>
    </location>
    <ligand>
        <name>phosphate</name>
        <dbReference type="ChEBI" id="CHEBI:43474"/>
    </ligand>
</feature>
<feature type="binding site">
    <location>
        <begin position="60"/>
        <end position="61"/>
    </location>
    <ligand>
        <name>phosphate</name>
        <dbReference type="ChEBI" id="CHEBI:43474"/>
    </ligand>
</feature>
<feature type="binding site">
    <location>
        <begin position="93"/>
        <end position="94"/>
    </location>
    <ligand>
        <name>phosphate</name>
        <dbReference type="ChEBI" id="CHEBI:43474"/>
    </ligand>
</feature>
<feature type="binding site">
    <location>
        <position position="196"/>
    </location>
    <ligand>
        <name>substrate</name>
    </ligand>
</feature>
<feature type="binding site">
    <location>
        <position position="197"/>
    </location>
    <ligand>
        <name>phosphate</name>
        <dbReference type="ChEBI" id="CHEBI:43474"/>
    </ligand>
</feature>
<feature type="binding site">
    <location>
        <begin position="220"/>
        <end position="222"/>
    </location>
    <ligand>
        <name>substrate</name>
    </ligand>
</feature>
<feature type="site" description="Important for substrate specificity">
    <location>
        <position position="178"/>
    </location>
</feature>
<feature type="site" description="Important for substrate specificity">
    <location>
        <position position="233"/>
    </location>
</feature>
<feature type="modified residue" description="N6-acetyllysine" evidence="1">
    <location>
        <position position="51"/>
    </location>
</feature>
<feature type="splice variant" id="VSP_044071" description="In isoform 5." evidence="12">
    <original>VSVDRVLKTLKENANKAKSLLLTTIPQIGSTEWSETLHNLKNMAQFSVLLPRH</original>
    <variation>MIKFQMILSEGYHPFNIQESPFYRGLLDFPSVGHGRGKKCLSAPAIILRPPQPRGTVTTFKVSWSKDQTYICMKS</variation>
    <location>
        <begin position="231"/>
        <end position="283"/>
    </location>
</feature>
<feature type="splice variant" id="VSP_044072" description="In isoform 6." evidence="12">
    <original>VSVDRVLKTLKENANKAKSLLLTTIPQIGSTEWSETLHNLKNMAQFSVLLPRH</original>
    <variation>MIKFQMILSEGYHPFNIQESPFYRGLLDFPSVGHGRGEILPLSPLDLAGYCFQQPMQPPCPDS</variation>
    <location>
        <begin position="231"/>
        <end position="283"/>
    </location>
</feature>
<feature type="splice variant" id="VSP_044073" description="In isoform 7." evidence="12">
    <original>SVDRVLKTLKENANKAKSLLLTTIPQIGSTEWSETLHNLKNMAQFSVLLPRH</original>
    <variation>RSAFQLPP</variation>
    <location>
        <begin position="232"/>
        <end position="283"/>
    </location>
</feature>
<feature type="splice variant" id="VSP_044074" description="In isoform 2." evidence="12">
    <original>NMAQFSVLLPRH</original>
    <variation>MIKFQMILSEGYHPFNIQESPFYRGLLDFPSVGHGRGKKCLSAPAIILRPPQPRGTVTTFKVSWSKDQTYICMKS</variation>
    <location>
        <begin position="272"/>
        <end position="283"/>
    </location>
</feature>
<feature type="splice variant" id="VSP_044075" description="In isoform 3." evidence="12">
    <original>NMAQFSVLLPRH</original>
    <variation>MIKFQMILSEGYHPFNIQESPFYRGLLDFPSVGHGRGEILPLSPLDLAGYCFQQPMQPPCPDS</variation>
    <location>
        <begin position="272"/>
        <end position="283"/>
    </location>
</feature>
<feature type="splice variant" id="VSP_044076" description="In isoform 4." evidence="12">
    <original>NMAQFSVLLPRH</original>
    <variation>VRSAFQLPP</variation>
    <location>
        <begin position="272"/>
        <end position="283"/>
    </location>
</feature>
<feature type="sequence variant" id="VAR_031470" description="In dbSNP:rs7023954." evidence="6 9 11">
    <original>V</original>
    <variation>I</variation>
    <location>
        <position position="56"/>
    </location>
</feature>
<feature type="sequence conflict" description="In Ref. 2; AAG38871/AAR24607." evidence="13" ref="2">
    <original>A</original>
    <variation>G</variation>
    <location>
        <position position="218"/>
    </location>
</feature>
<feature type="strand" evidence="14">
    <location>
        <begin position="11"/>
        <end position="17"/>
    </location>
</feature>
<feature type="helix" evidence="17">
    <location>
        <begin position="18"/>
        <end position="20"/>
    </location>
</feature>
<feature type="helix" evidence="14">
    <location>
        <begin position="23"/>
        <end position="25"/>
    </location>
</feature>
<feature type="strand" evidence="14">
    <location>
        <begin position="26"/>
        <end position="32"/>
    </location>
</feature>
<feature type="strand" evidence="14">
    <location>
        <begin position="45"/>
        <end position="50"/>
    </location>
</feature>
<feature type="strand" evidence="14">
    <location>
        <begin position="53"/>
        <end position="59"/>
    </location>
</feature>
<feature type="turn" evidence="14">
    <location>
        <begin position="60"/>
        <end position="65"/>
    </location>
</feature>
<feature type="helix" evidence="14">
    <location>
        <begin position="69"/>
        <end position="71"/>
    </location>
</feature>
<feature type="helix" evidence="14">
    <location>
        <begin position="74"/>
        <end position="83"/>
    </location>
</feature>
<feature type="strand" evidence="14">
    <location>
        <begin position="87"/>
        <end position="97"/>
    </location>
</feature>
<feature type="strand" evidence="14">
    <location>
        <begin position="107"/>
        <end position="109"/>
    </location>
</feature>
<feature type="strand" evidence="14">
    <location>
        <begin position="112"/>
        <end position="116"/>
    </location>
</feature>
<feature type="strand" evidence="14">
    <location>
        <begin position="126"/>
        <end position="128"/>
    </location>
</feature>
<feature type="strand" evidence="14">
    <location>
        <begin position="134"/>
        <end position="136"/>
    </location>
</feature>
<feature type="strand" evidence="17">
    <location>
        <begin position="140"/>
        <end position="142"/>
    </location>
</feature>
<feature type="helix" evidence="14">
    <location>
        <begin position="146"/>
        <end position="158"/>
    </location>
</feature>
<feature type="strand" evidence="14">
    <location>
        <begin position="163"/>
        <end position="165"/>
    </location>
</feature>
<feature type="strand" evidence="14">
    <location>
        <begin position="168"/>
        <end position="172"/>
    </location>
</feature>
<feature type="helix" evidence="14">
    <location>
        <begin position="180"/>
        <end position="188"/>
    </location>
</feature>
<feature type="strand" evidence="14">
    <location>
        <begin position="193"/>
        <end position="197"/>
    </location>
</feature>
<feature type="helix" evidence="14">
    <location>
        <begin position="198"/>
        <end position="207"/>
    </location>
</feature>
<feature type="strand" evidence="14">
    <location>
        <begin position="211"/>
        <end position="220"/>
    </location>
</feature>
<feature type="turn" evidence="16">
    <location>
        <begin position="222"/>
        <end position="224"/>
    </location>
</feature>
<feature type="strand" evidence="15">
    <location>
        <begin position="226"/>
        <end position="228"/>
    </location>
</feature>
<feature type="helix" evidence="14">
    <location>
        <begin position="233"/>
        <end position="259"/>
    </location>
</feature>
<feature type="helix" evidence="14">
    <location>
        <begin position="264"/>
        <end position="276"/>
    </location>
</feature>
<protein>
    <recommendedName>
        <fullName evidence="2">S-methyl-5'-thioadenosine phosphorylase</fullName>
        <ecNumber evidence="2">2.4.2.28</ecNumber>
    </recommendedName>
    <alternativeName>
        <fullName evidence="2">5'-methylthioadenosine phosphorylase</fullName>
        <shortName evidence="2">MTA phosphorylase</shortName>
        <shortName evidence="2">MTAP</shortName>
        <shortName evidence="2">MTAPase</shortName>
    </alternativeName>
</protein>
<evidence type="ECO:0000250" key="1">
    <source>
        <dbReference type="UniProtKB" id="Q9CQ65"/>
    </source>
</evidence>
<evidence type="ECO:0000255" key="2">
    <source>
        <dbReference type="HAMAP-Rule" id="MF_03155"/>
    </source>
</evidence>
<evidence type="ECO:0000269" key="3">
    <source>
    </source>
</evidence>
<evidence type="ECO:0000269" key="4">
    <source>
    </source>
</evidence>
<evidence type="ECO:0000269" key="5">
    <source>
    </source>
</evidence>
<evidence type="ECO:0000269" key="6">
    <source>
    </source>
</evidence>
<evidence type="ECO:0000269" key="7">
    <source>
    </source>
</evidence>
<evidence type="ECO:0000269" key="8">
    <source>
    </source>
</evidence>
<evidence type="ECO:0000269" key="9">
    <source>
    </source>
</evidence>
<evidence type="ECO:0000269" key="10">
    <source>
    </source>
</evidence>
<evidence type="ECO:0000269" key="11">
    <source ref="4"/>
</evidence>
<evidence type="ECO:0000303" key="12">
    <source>
    </source>
</evidence>
<evidence type="ECO:0000305" key="13"/>
<evidence type="ECO:0007829" key="14">
    <source>
        <dbReference type="PDB" id="5TC6"/>
    </source>
</evidence>
<evidence type="ECO:0007829" key="15">
    <source>
        <dbReference type="PDB" id="5TC7"/>
    </source>
</evidence>
<evidence type="ECO:0007829" key="16">
    <source>
        <dbReference type="PDB" id="6DYZ"/>
    </source>
</evidence>
<evidence type="ECO:0007829" key="17">
    <source>
        <dbReference type="PDB" id="6DZ3"/>
    </source>
</evidence>
<comment type="function">
    <text evidence="2 8">Catalyzes the reversible phosphorylation of S-methyl-5'-thioadenosine (MTA) to adenine and 5-methylthioribose-1-phosphate. Involved in the breakdown of MTA, a major by-product of polyamine biosynthesis. Responsible for the first step in the methionine salvage pathway after MTA has been generated from S-adenosylmethionine. Has broad substrate specificity with 6-aminopurine nucleosides as preferred substrates.</text>
</comment>
<comment type="catalytic activity">
    <reaction evidence="2">
        <text>S-methyl-5'-thioadenosine + phosphate = 5-(methylsulfanyl)-alpha-D-ribose 1-phosphate + adenine</text>
        <dbReference type="Rhea" id="RHEA:11852"/>
        <dbReference type="ChEBI" id="CHEBI:16708"/>
        <dbReference type="ChEBI" id="CHEBI:17509"/>
        <dbReference type="ChEBI" id="CHEBI:43474"/>
        <dbReference type="ChEBI" id="CHEBI:58533"/>
        <dbReference type="EC" id="2.4.2.28"/>
    </reaction>
</comment>
<comment type="activity regulation">
    <text>Inhibited by 5'-methylthiotubercin and 5'-chloroformycin.</text>
</comment>
<comment type="biophysicochemical properties">
    <kinetics>
        <KM evidence="8 10">5 uM for S-methyl-5'-thioadenosine</KM>
        <KM evidence="8 10">580 uM for phosphate</KM>
        <KM evidence="8 10">23 uM for adenine</KM>
        <KM evidence="8 10">8 uM for S-methyl-5-thio-alpha-D-ribose 1-phosphate</KM>
    </kinetics>
    <phDependence>
        <text evidence="8 10">Optimum pH is 7.2-7.6.</text>
    </phDependence>
</comment>
<comment type="pathway">
    <text evidence="2">Amino-acid biosynthesis; L-methionine biosynthesis via salvage pathway; S-methyl-5-thio-alpha-D-ribose 1-phosphate from S-methyl-5'-thioadenosine (phosphorylase route): step 1/1.</text>
</comment>
<comment type="subunit">
    <text evidence="2 3 4 5 8 10">Homotrimer.</text>
</comment>
<comment type="interaction">
    <interactant intactId="EBI-2547776">
        <id>Q13126</id>
    </interactant>
    <interactant intactId="EBI-1003700">
        <id>Q9H3R5</id>
        <label>CENPH</label>
    </interactant>
    <organismsDiffer>false</organismsDiffer>
    <experiments>3</experiments>
</comment>
<comment type="interaction">
    <interactant intactId="EBI-2547776">
        <id>Q13126</id>
    </interactant>
    <interactant intactId="EBI-1054670">
        <id>Q9P0I2</id>
        <label>EMC3</label>
    </interactant>
    <organismsDiffer>false</organismsDiffer>
    <experiments>3</experiments>
</comment>
<comment type="subcellular location">
    <subcellularLocation>
        <location>Cytoplasm</location>
    </subcellularLocation>
    <subcellularLocation>
        <location evidence="2">Nucleus</location>
    </subcellularLocation>
</comment>
<comment type="alternative products">
    <event type="alternative splicing"/>
    <isoform>
        <id>Q13126-1</id>
        <name>1</name>
        <sequence type="displayed"/>
    </isoform>
    <isoform>
        <id>Q13126-2</id>
        <name>2</name>
        <name>MTAP_v1</name>
        <sequence type="described" ref="VSP_044074"/>
    </isoform>
    <isoform>
        <id>Q13126-3</id>
        <name>3</name>
        <name>MTAP_v2</name>
        <sequence type="described" ref="VSP_044075"/>
    </isoform>
    <isoform>
        <id>Q13126-4</id>
        <name>4</name>
        <name>MTAP_v3</name>
        <sequence type="described" ref="VSP_044076"/>
    </isoform>
    <isoform>
        <id>Q13126-5</id>
        <name>5</name>
        <name>MTAP_v4</name>
        <sequence type="described" ref="VSP_044071"/>
    </isoform>
    <isoform>
        <id>Q13126-6</id>
        <name>6</name>
        <name>MTAP_v5</name>
        <sequence type="described" ref="VSP_044072"/>
    </isoform>
    <isoform>
        <id>Q13126-7</id>
        <name>7</name>
        <name>MTAP_v6</name>
        <sequence type="described" ref="VSP_044073"/>
    </isoform>
</comment>
<comment type="tissue specificity">
    <text>Ubiquitously expressed.</text>
</comment>
<comment type="disease" evidence="7">
    <disease id="DI-03464">
        <name>Diaphyseal medullary stenosis with malignant fibrous histiocytoma</name>
        <acronym>DMSMFH</acronym>
        <description>An autosomal dominant bone dysplasia characterized by pathologic fractures due to abnormal cortical growth and diaphyseal medullary stenosis. The fractures heal poorly, and there is progressive bowing of the lower extremities. Some patients show a limb-girdle myopathy, with muscle weakness and atrophy. Approximately 35% of affected individuals develop an aggressive form of bone sarcoma consistent with malignant fibrous histiocytoma or osteosarcoma.</description>
        <dbReference type="MIM" id="112250"/>
    </disease>
    <text evidence="7">The disease is caused by variants affecting the gene represented in this entry. DMSMFH causing mutations found in MTAP exon 9 result in exon skipping and dysregulated alternative splicing of all MTAP isoforms (PubMed:22464254).</text>
</comment>
<comment type="disease">
    <text>Loss of MTAP activity may play a role in human cancer. MTAP loss has been reported in a number of cancers, including osteosarcoma, malignant melanoma and gastric cancer.</text>
</comment>
<comment type="similarity">
    <text evidence="2">Belongs to the PNP/MTAP phosphorylase family. MTAP subfamily.</text>
</comment>
<proteinExistence type="evidence at protein level"/>